<accession>Q9P2S6</accession>
<accession>B2RB78</accession>
<accession>Q4ZFV3</accession>
<accession>Q8IYX5</accession>
<accession>Q8NDK5</accession>
<accession>Q9H0V8</accession>
<accession>Q9NX10</accession>
<gene>
    <name type="primary">ANKMY1</name>
    <name type="synonym">TSAL1</name>
    <name type="synonym">ZMYND13</name>
</gene>
<sequence length="941" mass="105516">MYQGEFGLNMKLGYGKFSWPTGESYHGQFYRDHCHGLGTYMWPDGSSFTGTFYLSHREGYGTMYMKTRLFQGLYKADQRFGPGVETYPDGSQDVGLWFREQLIKLCTQIPSGFSLLRYPEFSSFITHSPARISLSEEEKTEWGLQEGQDPFFYDYKRFLLNDNLTLPPEMYVYSTNSDHLPMTSSFRKELDARIFLNEIPPFVEDGEPWFIINETPLLVKIQKQTYKFRNKPAHTSWNMGAILEGKRSGFAPCGPKEQLSMEMILKAEEGNHEWICRILKDNFASADVADAKGYTVLAAAATHCHNDIVNLLLDCGADVNKCSDEGLTALSMCFLLHYPAQSFKPNVAERTIPEPQEPPKFPVVPILSSSFMDTNLESLYYEVNVPSQGSYELRPPPAPLLLPRVSGSHEGGHFQDTGQCGGSIDHRSSSLKGDSPLVKGSLGHVESGLEDVLGNTDRGSLCSAETKFESNVCVCDFSIELSQAMLERSAQSHSLLKMASPSPCTSSFDKGTMRRMALSMIERRKRWRTIKLLLRRGADPNLCCVPMQVLFLAVKAGDVDGVRLLLEHGARTDICFPPQLSTLTPLHIAAALPGEEGVQIVELLLHAITDVDAKASDEDDTYKPGKLDLLPSSLKLSNEPGPPQAYYSTDTALPEEGGRTALHMACEREDDNKCARDIVRLLLSHGANPNLLWSGHSPLSLSIASGNELVVKELLTQGADPNLPLTKGLGSALCVACDLTYEHQRNMDSKLALIDRLISHGADILKPVMLRQGEKEAVGTAVDYGYFRFFQDRRIARCPFHTLMPAERETFLARKRLLEYMGLQLRQAVFAKESQWDPTWLYLCKRAELIPSHRMKKKGPSLPRGLDVKEQGQIPFFKFCYQCGRSIGVRLLPCPRCYGILTCSKYCKTKAWTEFHKKDCGDLVAIVTQLEQVSRRREEFQ</sequence>
<feature type="chain" id="PRO_0000066894" description="Ankyrin repeat and MYND domain-containing protein 1">
    <location>
        <begin position="1"/>
        <end position="941"/>
    </location>
</feature>
<feature type="repeat" description="MORN 1">
    <location>
        <begin position="2"/>
        <end position="24"/>
    </location>
</feature>
<feature type="repeat" description="MORN 2">
    <location>
        <begin position="25"/>
        <end position="47"/>
    </location>
</feature>
<feature type="repeat" description="MORN 3">
    <location>
        <begin position="70"/>
        <end position="92"/>
    </location>
</feature>
<feature type="repeat" description="ANK 1">
    <location>
        <begin position="292"/>
        <end position="321"/>
    </location>
</feature>
<feature type="repeat" description="ANK 2">
    <location>
        <begin position="513"/>
        <end position="542"/>
    </location>
</feature>
<feature type="repeat" description="ANK 3">
    <location>
        <begin position="545"/>
        <end position="574"/>
    </location>
</feature>
<feature type="repeat" description="ANK 4">
    <location>
        <begin position="581"/>
        <end position="613"/>
    </location>
</feature>
<feature type="repeat" description="ANK 5">
    <location>
        <begin position="657"/>
        <end position="691"/>
    </location>
</feature>
<feature type="repeat" description="ANK 6">
    <location>
        <begin position="694"/>
        <end position="723"/>
    </location>
</feature>
<feature type="repeat" description="ANK 7">
    <location>
        <begin position="737"/>
        <end position="766"/>
    </location>
</feature>
<feature type="zinc finger region" description="MYND-type" evidence="1">
    <location>
        <begin position="880"/>
        <end position="920"/>
    </location>
</feature>
<feature type="binding site" evidence="1">
    <location>
        <position position="880"/>
    </location>
    <ligand>
        <name>Zn(2+)</name>
        <dbReference type="ChEBI" id="CHEBI:29105"/>
        <label>1</label>
    </ligand>
</feature>
<feature type="binding site" evidence="1">
    <location>
        <position position="883"/>
    </location>
    <ligand>
        <name>Zn(2+)</name>
        <dbReference type="ChEBI" id="CHEBI:29105"/>
        <label>1</label>
    </ligand>
</feature>
<feature type="binding site" evidence="1">
    <location>
        <position position="894"/>
    </location>
    <ligand>
        <name>Zn(2+)</name>
        <dbReference type="ChEBI" id="CHEBI:29105"/>
        <label>2</label>
    </ligand>
</feature>
<feature type="binding site" evidence="1">
    <location>
        <position position="897"/>
    </location>
    <ligand>
        <name>Zn(2+)</name>
        <dbReference type="ChEBI" id="CHEBI:29105"/>
        <label>2</label>
    </ligand>
</feature>
<feature type="binding site" evidence="1">
    <location>
        <position position="903"/>
    </location>
    <ligand>
        <name>Zn(2+)</name>
        <dbReference type="ChEBI" id="CHEBI:29105"/>
        <label>1</label>
    </ligand>
</feature>
<feature type="binding site" evidence="1">
    <location>
        <position position="907"/>
    </location>
    <ligand>
        <name>Zn(2+)</name>
        <dbReference type="ChEBI" id="CHEBI:29105"/>
        <label>1</label>
    </ligand>
</feature>
<feature type="binding site" evidence="1">
    <location>
        <position position="916"/>
    </location>
    <ligand>
        <name>Zn(2+)</name>
        <dbReference type="ChEBI" id="CHEBI:29105"/>
        <label>2</label>
    </ligand>
</feature>
<feature type="binding site" evidence="1">
    <location>
        <position position="920"/>
    </location>
    <ligand>
        <name>Zn(2+)</name>
        <dbReference type="ChEBI" id="CHEBI:29105"/>
        <label>2</label>
    </ligand>
</feature>
<feature type="splice variant" id="VSP_007442" description="In isoform 2 and isoform 3." evidence="6 7">
    <original>MYQGEFGLNMKLGYGKFSWPTGESYHGQFYRDHCHGLGTYMWPDGSSFTGTFYLSHREGYGTMYMKTRLFQGLYKADQRFGPGVETYPDGSQDVGLWFREQLIKLCTQIPSGFSLLRYPEFSSFITHSPARISLSEEEKTEWGLQEGQDPFFYDYKRFLLNDNLTLPPEMYVYSTNSDHLPMTSSFRKELDARIFLNEIPPFVEDGEPWFIINETPLLVKIQKQTYKFRNKPAHTSWNMGAILEGKRSGFAPCGPKEQLSMEMILKAEEGNHEWICRILKDNFASADVADAKGYTVLAAAA</original>
    <variation>MEGAHASLSLEDEVSGAGSRQRPLEGKGGETPAAEEPGSLKNYAVFATRDVSAAPEKEEEEAEGPLRAQDLRESYIQLVQGVQEWQDGCMYQGEFGLNMKLGYGKFSWPTGESYHGQFYRDHCHGLGTYMWPDGSSFTGTFYLSHREGYGTMYMKTRLFQ</variation>
    <location>
        <begin position="1"/>
        <end position="301"/>
    </location>
</feature>
<feature type="splice variant" id="VSP_039104" description="In isoform 4." evidence="5">
    <location>
        <begin position="72"/>
        <end position="301"/>
    </location>
</feature>
<feature type="splice variant" id="VSP_007443" description="In isoform 3." evidence="7">
    <original>L</original>
    <variation>C</variation>
    <location>
        <position position="580"/>
    </location>
</feature>
<feature type="splice variant" id="VSP_007444" description="In isoform 3." evidence="7">
    <location>
        <begin position="581"/>
        <end position="941"/>
    </location>
</feature>
<feature type="splice variant" id="VSP_007445" description="In isoform 2." evidence="6">
    <location>
        <begin position="627"/>
        <end position="709"/>
    </location>
</feature>
<feature type="sequence variant" id="VAR_048264" description="In dbSNP:rs35278753.">
    <original>D</original>
    <variation>N</variation>
    <location>
        <position position="89"/>
    </location>
</feature>
<feature type="sequence variant" id="VAR_048265" description="In dbSNP:rs35996697." evidence="4">
    <original>I</original>
    <variation>M</variation>
    <location>
        <position position="424"/>
    </location>
</feature>
<feature type="sequence variant" id="VAR_048266" description="In dbSNP:rs3796118.">
    <original>D</original>
    <variation>V</variation>
    <location>
        <position position="451"/>
    </location>
</feature>
<feature type="sequence variant" id="VAR_048267" description="In dbSNP:rs3821348." evidence="2 3">
    <original>V</original>
    <variation>L</variation>
    <location>
        <position position="472"/>
    </location>
</feature>
<feature type="sequence variant" id="VAR_048268" description="In dbSNP:rs35044862.">
    <original>T</original>
    <variation>M</variation>
    <location>
        <position position="649"/>
    </location>
</feature>
<feature type="sequence conflict" description="In Ref. 6; CAB66553." evidence="8" ref="6">
    <original>N</original>
    <variation>D</variation>
    <location>
        <position position="455"/>
    </location>
</feature>
<feature type="sequence conflict" description="In Ref. 2; BAA91213." evidence="8" ref="2">
    <original>K</original>
    <variation>E</variation>
    <location>
        <position position="531"/>
    </location>
</feature>
<reference key="1">
    <citation type="submission" date="1999-11" db="EMBL/GenBank/DDBJ databases">
        <title>Testis specific ankyrin like protein.</title>
        <authorList>
            <person name="Kato M."/>
            <person name="Miki Y."/>
        </authorList>
    </citation>
    <scope>NUCLEOTIDE SEQUENCE [MRNA] (ISOFORM 1)</scope>
    <scope>VARIANT MET-424</scope>
    <source>
        <tissue>Testis</tissue>
    </source>
</reference>
<reference key="2">
    <citation type="journal article" date="2004" name="Nat. Genet.">
        <title>Complete sequencing and characterization of 21,243 full-length human cDNAs.</title>
        <authorList>
            <person name="Ota T."/>
            <person name="Suzuki Y."/>
            <person name="Nishikawa T."/>
            <person name="Otsuki T."/>
            <person name="Sugiyama T."/>
            <person name="Irie R."/>
            <person name="Wakamatsu A."/>
            <person name="Hayashi K."/>
            <person name="Sato H."/>
            <person name="Nagai K."/>
            <person name="Kimura K."/>
            <person name="Makita H."/>
            <person name="Sekine M."/>
            <person name="Obayashi M."/>
            <person name="Nishi T."/>
            <person name="Shibahara T."/>
            <person name="Tanaka T."/>
            <person name="Ishii S."/>
            <person name="Yamamoto J."/>
            <person name="Saito K."/>
            <person name="Kawai Y."/>
            <person name="Isono Y."/>
            <person name="Nakamura Y."/>
            <person name="Nagahari K."/>
            <person name="Murakami K."/>
            <person name="Yasuda T."/>
            <person name="Iwayanagi T."/>
            <person name="Wagatsuma M."/>
            <person name="Shiratori A."/>
            <person name="Sudo H."/>
            <person name="Hosoiri T."/>
            <person name="Kaku Y."/>
            <person name="Kodaira H."/>
            <person name="Kondo H."/>
            <person name="Sugawara M."/>
            <person name="Takahashi M."/>
            <person name="Kanda K."/>
            <person name="Yokoi T."/>
            <person name="Furuya T."/>
            <person name="Kikkawa E."/>
            <person name="Omura Y."/>
            <person name="Abe K."/>
            <person name="Kamihara K."/>
            <person name="Katsuta N."/>
            <person name="Sato K."/>
            <person name="Tanikawa M."/>
            <person name="Yamazaki M."/>
            <person name="Ninomiya K."/>
            <person name="Ishibashi T."/>
            <person name="Yamashita H."/>
            <person name="Murakawa K."/>
            <person name="Fujimori K."/>
            <person name="Tanai H."/>
            <person name="Kimata M."/>
            <person name="Watanabe M."/>
            <person name="Hiraoka S."/>
            <person name="Chiba Y."/>
            <person name="Ishida S."/>
            <person name="Ono Y."/>
            <person name="Takiguchi S."/>
            <person name="Watanabe S."/>
            <person name="Yosida M."/>
            <person name="Hotuta T."/>
            <person name="Kusano J."/>
            <person name="Kanehori K."/>
            <person name="Takahashi-Fujii A."/>
            <person name="Hara H."/>
            <person name="Tanase T.-O."/>
            <person name="Nomura Y."/>
            <person name="Togiya S."/>
            <person name="Komai F."/>
            <person name="Hara R."/>
            <person name="Takeuchi K."/>
            <person name="Arita M."/>
            <person name="Imose N."/>
            <person name="Musashino K."/>
            <person name="Yuuki H."/>
            <person name="Oshima A."/>
            <person name="Sasaki N."/>
            <person name="Aotsuka S."/>
            <person name="Yoshikawa Y."/>
            <person name="Matsunawa H."/>
            <person name="Ichihara T."/>
            <person name="Shiohata N."/>
            <person name="Sano S."/>
            <person name="Moriya S."/>
            <person name="Momiyama H."/>
            <person name="Satoh N."/>
            <person name="Takami S."/>
            <person name="Terashima Y."/>
            <person name="Suzuki O."/>
            <person name="Nakagawa S."/>
            <person name="Senoh A."/>
            <person name="Mizoguchi H."/>
            <person name="Goto Y."/>
            <person name="Shimizu F."/>
            <person name="Wakebe H."/>
            <person name="Hishigaki H."/>
            <person name="Watanabe T."/>
            <person name="Sugiyama A."/>
            <person name="Takemoto M."/>
            <person name="Kawakami B."/>
            <person name="Yamazaki M."/>
            <person name="Watanabe K."/>
            <person name="Kumagai A."/>
            <person name="Itakura S."/>
            <person name="Fukuzumi Y."/>
            <person name="Fujimori Y."/>
            <person name="Komiyama M."/>
            <person name="Tashiro H."/>
            <person name="Tanigami A."/>
            <person name="Fujiwara T."/>
            <person name="Ono T."/>
            <person name="Yamada K."/>
            <person name="Fujii Y."/>
            <person name="Ozaki K."/>
            <person name="Hirao M."/>
            <person name="Ohmori Y."/>
            <person name="Kawabata A."/>
            <person name="Hikiji T."/>
            <person name="Kobatake N."/>
            <person name="Inagaki H."/>
            <person name="Ikema Y."/>
            <person name="Okamoto S."/>
            <person name="Okitani R."/>
            <person name="Kawakami T."/>
            <person name="Noguchi S."/>
            <person name="Itoh T."/>
            <person name="Shigeta K."/>
            <person name="Senba T."/>
            <person name="Matsumura K."/>
            <person name="Nakajima Y."/>
            <person name="Mizuno T."/>
            <person name="Morinaga M."/>
            <person name="Sasaki M."/>
            <person name="Togashi T."/>
            <person name="Oyama M."/>
            <person name="Hata H."/>
            <person name="Watanabe M."/>
            <person name="Komatsu T."/>
            <person name="Mizushima-Sugano J."/>
            <person name="Satoh T."/>
            <person name="Shirai Y."/>
            <person name="Takahashi Y."/>
            <person name="Nakagawa K."/>
            <person name="Okumura K."/>
            <person name="Nagase T."/>
            <person name="Nomura N."/>
            <person name="Kikuchi H."/>
            <person name="Masuho Y."/>
            <person name="Yamashita R."/>
            <person name="Nakai K."/>
            <person name="Yada T."/>
            <person name="Nakamura Y."/>
            <person name="Ohara O."/>
            <person name="Isogai T."/>
            <person name="Sugano S."/>
        </authorList>
    </citation>
    <scope>NUCLEOTIDE SEQUENCE [LARGE SCALE MRNA] (ISOFORMS 1 AND 2)</scope>
    <scope>VARIANT LEU-472</scope>
    <source>
        <tissue>Trachea</tissue>
    </source>
</reference>
<reference key="3">
    <citation type="journal article" date="2005" name="Nature">
        <title>Generation and annotation of the DNA sequences of human chromosomes 2 and 4.</title>
        <authorList>
            <person name="Hillier L.W."/>
            <person name="Graves T.A."/>
            <person name="Fulton R.S."/>
            <person name="Fulton L.A."/>
            <person name="Pepin K.H."/>
            <person name="Minx P."/>
            <person name="Wagner-McPherson C."/>
            <person name="Layman D."/>
            <person name="Wylie K."/>
            <person name="Sekhon M."/>
            <person name="Becker M.C."/>
            <person name="Fewell G.A."/>
            <person name="Delehaunty K.D."/>
            <person name="Miner T.L."/>
            <person name="Nash W.E."/>
            <person name="Kremitzki C."/>
            <person name="Oddy L."/>
            <person name="Du H."/>
            <person name="Sun H."/>
            <person name="Bradshaw-Cordum H."/>
            <person name="Ali J."/>
            <person name="Carter J."/>
            <person name="Cordes M."/>
            <person name="Harris A."/>
            <person name="Isak A."/>
            <person name="van Brunt A."/>
            <person name="Nguyen C."/>
            <person name="Du F."/>
            <person name="Courtney L."/>
            <person name="Kalicki J."/>
            <person name="Ozersky P."/>
            <person name="Abbott S."/>
            <person name="Armstrong J."/>
            <person name="Belter E.A."/>
            <person name="Caruso L."/>
            <person name="Cedroni M."/>
            <person name="Cotton M."/>
            <person name="Davidson T."/>
            <person name="Desai A."/>
            <person name="Elliott G."/>
            <person name="Erb T."/>
            <person name="Fronick C."/>
            <person name="Gaige T."/>
            <person name="Haakenson W."/>
            <person name="Haglund K."/>
            <person name="Holmes A."/>
            <person name="Harkins R."/>
            <person name="Kim K."/>
            <person name="Kruchowski S.S."/>
            <person name="Strong C.M."/>
            <person name="Grewal N."/>
            <person name="Goyea E."/>
            <person name="Hou S."/>
            <person name="Levy A."/>
            <person name="Martinka S."/>
            <person name="Mead K."/>
            <person name="McLellan M.D."/>
            <person name="Meyer R."/>
            <person name="Randall-Maher J."/>
            <person name="Tomlinson C."/>
            <person name="Dauphin-Kohlberg S."/>
            <person name="Kozlowicz-Reilly A."/>
            <person name="Shah N."/>
            <person name="Swearengen-Shahid S."/>
            <person name="Snider J."/>
            <person name="Strong J.T."/>
            <person name="Thompson J."/>
            <person name="Yoakum M."/>
            <person name="Leonard S."/>
            <person name="Pearman C."/>
            <person name="Trani L."/>
            <person name="Radionenko M."/>
            <person name="Waligorski J.E."/>
            <person name="Wang C."/>
            <person name="Rock S.M."/>
            <person name="Tin-Wollam A.-M."/>
            <person name="Maupin R."/>
            <person name="Latreille P."/>
            <person name="Wendl M.C."/>
            <person name="Yang S.-P."/>
            <person name="Pohl C."/>
            <person name="Wallis J.W."/>
            <person name="Spieth J."/>
            <person name="Bieri T.A."/>
            <person name="Berkowicz N."/>
            <person name="Nelson J.O."/>
            <person name="Osborne J."/>
            <person name="Ding L."/>
            <person name="Meyer R."/>
            <person name="Sabo A."/>
            <person name="Shotland Y."/>
            <person name="Sinha P."/>
            <person name="Wohldmann P.E."/>
            <person name="Cook L.L."/>
            <person name="Hickenbotham M.T."/>
            <person name="Eldred J."/>
            <person name="Williams D."/>
            <person name="Jones T.A."/>
            <person name="She X."/>
            <person name="Ciccarelli F.D."/>
            <person name="Izaurralde E."/>
            <person name="Taylor J."/>
            <person name="Schmutz J."/>
            <person name="Myers R.M."/>
            <person name="Cox D.R."/>
            <person name="Huang X."/>
            <person name="McPherson J.D."/>
            <person name="Mardis E.R."/>
            <person name="Clifton S.W."/>
            <person name="Warren W.C."/>
            <person name="Chinwalla A.T."/>
            <person name="Eddy S.R."/>
            <person name="Marra M.A."/>
            <person name="Ovcharenko I."/>
            <person name="Furey T.S."/>
            <person name="Miller W."/>
            <person name="Eichler E.E."/>
            <person name="Bork P."/>
            <person name="Suyama M."/>
            <person name="Torrents D."/>
            <person name="Waterston R.H."/>
            <person name="Wilson R.K."/>
        </authorList>
    </citation>
    <scope>NUCLEOTIDE SEQUENCE [LARGE SCALE GENOMIC DNA]</scope>
</reference>
<reference key="4">
    <citation type="submission" date="2005-07" db="EMBL/GenBank/DDBJ databases">
        <authorList>
            <person name="Mural R.J."/>
            <person name="Istrail S."/>
            <person name="Sutton G."/>
            <person name="Florea L."/>
            <person name="Halpern A.L."/>
            <person name="Mobarry C.M."/>
            <person name="Lippert R."/>
            <person name="Walenz B."/>
            <person name="Shatkay H."/>
            <person name="Dew I."/>
            <person name="Miller J.R."/>
            <person name="Flanigan M.J."/>
            <person name="Edwards N.J."/>
            <person name="Bolanos R."/>
            <person name="Fasulo D."/>
            <person name="Halldorsson B.V."/>
            <person name="Hannenhalli S."/>
            <person name="Turner R."/>
            <person name="Yooseph S."/>
            <person name="Lu F."/>
            <person name="Nusskern D.R."/>
            <person name="Shue B.C."/>
            <person name="Zheng X.H."/>
            <person name="Zhong F."/>
            <person name="Delcher A.L."/>
            <person name="Huson D.H."/>
            <person name="Kravitz S.A."/>
            <person name="Mouchard L."/>
            <person name="Reinert K."/>
            <person name="Remington K.A."/>
            <person name="Clark A.G."/>
            <person name="Waterman M.S."/>
            <person name="Eichler E.E."/>
            <person name="Adams M.D."/>
            <person name="Hunkapiller M.W."/>
            <person name="Myers E.W."/>
            <person name="Venter J.C."/>
        </authorList>
    </citation>
    <scope>NUCLEOTIDE SEQUENCE [LARGE SCALE GENOMIC DNA]</scope>
</reference>
<reference key="5">
    <citation type="journal article" date="2004" name="Genome Res.">
        <title>The status, quality, and expansion of the NIH full-length cDNA project: the Mammalian Gene Collection (MGC).</title>
        <authorList>
            <consortium name="The MGC Project Team"/>
        </authorList>
    </citation>
    <scope>NUCLEOTIDE SEQUENCE [LARGE SCALE MRNA] (ISOFORM 3)</scope>
    <source>
        <tissue>Brain</tissue>
    </source>
</reference>
<reference key="6">
    <citation type="journal article" date="2001" name="Genome Res.">
        <title>Towards a catalog of human genes and proteins: sequencing and analysis of 500 novel complete protein coding human cDNAs.</title>
        <authorList>
            <person name="Wiemann S."/>
            <person name="Weil B."/>
            <person name="Wellenreuther R."/>
            <person name="Gassenhuber J."/>
            <person name="Glassl S."/>
            <person name="Ansorge W."/>
            <person name="Boecher M."/>
            <person name="Bloecker H."/>
            <person name="Bauersachs S."/>
            <person name="Blum H."/>
            <person name="Lauber J."/>
            <person name="Duesterhoeft A."/>
            <person name="Beyer A."/>
            <person name="Koehrer K."/>
            <person name="Strack N."/>
            <person name="Mewes H.-W."/>
            <person name="Ottenwaelder B."/>
            <person name="Obermaier B."/>
            <person name="Tampe J."/>
            <person name="Heubner D."/>
            <person name="Wambutt R."/>
            <person name="Korn B."/>
            <person name="Klein M."/>
            <person name="Poustka A."/>
        </authorList>
    </citation>
    <scope>NUCLEOTIDE SEQUENCE [LARGE SCALE MRNA] OF 1-522 (ISOFORM 4)</scope>
    <scope>VARIANT LEU-472</scope>
    <source>
        <tissue>Brain</tissue>
    </source>
</reference>
<reference key="7">
    <citation type="journal article" date="2007" name="BMC Genomics">
        <title>The full-ORF clone resource of the German cDNA consortium.</title>
        <authorList>
            <person name="Bechtel S."/>
            <person name="Rosenfelder H."/>
            <person name="Duda A."/>
            <person name="Schmidt C.P."/>
            <person name="Ernst U."/>
            <person name="Wellenreuther R."/>
            <person name="Mehrle A."/>
            <person name="Schuster C."/>
            <person name="Bahr A."/>
            <person name="Bloecker H."/>
            <person name="Heubner D."/>
            <person name="Hoerlein A."/>
            <person name="Michel G."/>
            <person name="Wedler H."/>
            <person name="Koehrer K."/>
            <person name="Ottenwaelder B."/>
            <person name="Poustka A."/>
            <person name="Wiemann S."/>
            <person name="Schupp I."/>
        </authorList>
    </citation>
    <scope>NUCLEOTIDE SEQUENCE [LARGE SCALE MRNA] OF 221-941 (ISOFORM 1)</scope>
    <source>
        <tissue>Testis</tissue>
    </source>
</reference>
<organism>
    <name type="scientific">Homo sapiens</name>
    <name type="common">Human</name>
    <dbReference type="NCBI Taxonomy" id="9606"/>
    <lineage>
        <taxon>Eukaryota</taxon>
        <taxon>Metazoa</taxon>
        <taxon>Chordata</taxon>
        <taxon>Craniata</taxon>
        <taxon>Vertebrata</taxon>
        <taxon>Euteleostomi</taxon>
        <taxon>Mammalia</taxon>
        <taxon>Eutheria</taxon>
        <taxon>Euarchontoglires</taxon>
        <taxon>Primates</taxon>
        <taxon>Haplorrhini</taxon>
        <taxon>Catarrhini</taxon>
        <taxon>Hominidae</taxon>
        <taxon>Homo</taxon>
    </lineage>
</organism>
<dbReference type="EMBL" id="AB034636">
    <property type="protein sequence ID" value="BAA92844.1"/>
    <property type="molecule type" value="mRNA"/>
</dbReference>
<dbReference type="EMBL" id="AK000506">
    <property type="protein sequence ID" value="BAA91213.1"/>
    <property type="molecule type" value="mRNA"/>
</dbReference>
<dbReference type="EMBL" id="AK314534">
    <property type="protein sequence ID" value="BAG37125.1"/>
    <property type="molecule type" value="mRNA"/>
</dbReference>
<dbReference type="EMBL" id="AC124862">
    <property type="protein sequence ID" value="AAX88942.1"/>
    <property type="molecule type" value="Genomic_DNA"/>
</dbReference>
<dbReference type="EMBL" id="CH471063">
    <property type="protein sequence ID" value="EAW71190.1"/>
    <property type="molecule type" value="Genomic_DNA"/>
</dbReference>
<dbReference type="EMBL" id="BC033495">
    <property type="protein sequence ID" value="AAH33495.1"/>
    <property type="molecule type" value="mRNA"/>
</dbReference>
<dbReference type="EMBL" id="AL136618">
    <property type="protein sequence ID" value="CAB66553.1"/>
    <property type="molecule type" value="mRNA"/>
</dbReference>
<dbReference type="EMBL" id="AL833866">
    <property type="protein sequence ID" value="CAD38724.1"/>
    <property type="molecule type" value="mRNA"/>
</dbReference>
<dbReference type="CCDS" id="CCDS2535.1">
    <molecule id="Q9P2S6-2"/>
</dbReference>
<dbReference type="CCDS" id="CCDS2536.1">
    <molecule id="Q9P2S6-1"/>
</dbReference>
<dbReference type="RefSeq" id="NP_001269709.1">
    <property type="nucleotide sequence ID" value="NM_001282780.1"/>
</dbReference>
<dbReference type="RefSeq" id="NP_001269710.1">
    <property type="nucleotide sequence ID" value="NM_001282781.1"/>
</dbReference>
<dbReference type="RefSeq" id="NP_001295304.1">
    <property type="nucleotide sequence ID" value="NM_001308375.1"/>
</dbReference>
<dbReference type="RefSeq" id="NP_057636.2">
    <molecule id="Q9P2S6-1"/>
    <property type="nucleotide sequence ID" value="NM_016552.5"/>
</dbReference>
<dbReference type="RefSeq" id="NP_060314.2">
    <molecule id="Q9P2S6-2"/>
    <property type="nucleotide sequence ID" value="NM_017844.4"/>
</dbReference>
<dbReference type="SMR" id="Q9P2S6"/>
<dbReference type="BioGRID" id="119433">
    <property type="interactions" value="2"/>
</dbReference>
<dbReference type="FunCoup" id="Q9P2S6">
    <property type="interactions" value="155"/>
</dbReference>
<dbReference type="STRING" id="9606.ENSP00000385887"/>
<dbReference type="GlyGen" id="Q9P2S6">
    <property type="glycosylation" value="1 site, 1 O-linked glycan (1 site)"/>
</dbReference>
<dbReference type="iPTMnet" id="Q9P2S6"/>
<dbReference type="PhosphoSitePlus" id="Q9P2S6"/>
<dbReference type="BioMuta" id="ANKMY1"/>
<dbReference type="DMDM" id="30912747"/>
<dbReference type="jPOST" id="Q9P2S6"/>
<dbReference type="MassIVE" id="Q9P2S6"/>
<dbReference type="PaxDb" id="9606-ENSP00000385887"/>
<dbReference type="PeptideAtlas" id="Q9P2S6"/>
<dbReference type="ProteomicsDB" id="83890">
    <molecule id="Q9P2S6-1"/>
</dbReference>
<dbReference type="ProteomicsDB" id="83891">
    <molecule id="Q9P2S6-2"/>
</dbReference>
<dbReference type="ProteomicsDB" id="83892">
    <molecule id="Q9P2S6-3"/>
</dbReference>
<dbReference type="ProteomicsDB" id="83893">
    <molecule id="Q9P2S6-4"/>
</dbReference>
<dbReference type="Antibodypedia" id="20289">
    <property type="antibodies" value="115 antibodies from 16 providers"/>
</dbReference>
<dbReference type="DNASU" id="51281"/>
<dbReference type="Ensembl" id="ENST00000272972.7">
    <molecule id="Q9P2S6-1"/>
    <property type="protein sequence ID" value="ENSP00000272972.3"/>
    <property type="gene ID" value="ENSG00000144504.16"/>
</dbReference>
<dbReference type="Ensembl" id="ENST00000361678.8">
    <molecule id="Q9P2S6-2"/>
    <property type="protein sequence ID" value="ENSP00000355097.4"/>
    <property type="gene ID" value="ENSG00000144504.16"/>
</dbReference>
<dbReference type="Ensembl" id="ENST00000405523.7">
    <molecule id="Q9P2S6-3"/>
    <property type="protein sequence ID" value="ENSP00000385635.3"/>
    <property type="gene ID" value="ENSG00000144504.16"/>
</dbReference>
<dbReference type="GeneID" id="51281"/>
<dbReference type="KEGG" id="hsa:51281"/>
<dbReference type="UCSC" id="uc002vyz.3">
    <molecule id="Q9P2S6-1"/>
    <property type="organism name" value="human"/>
</dbReference>
<dbReference type="AGR" id="HGNC:20987"/>
<dbReference type="CTD" id="51281"/>
<dbReference type="DisGeNET" id="51281"/>
<dbReference type="GeneCards" id="ANKMY1"/>
<dbReference type="HGNC" id="HGNC:20987">
    <property type="gene designation" value="ANKMY1"/>
</dbReference>
<dbReference type="HPA" id="ENSG00000144504">
    <property type="expression patterns" value="Tissue enhanced (testis)"/>
</dbReference>
<dbReference type="MIM" id="620842">
    <property type="type" value="gene"/>
</dbReference>
<dbReference type="neXtProt" id="NX_Q9P2S6"/>
<dbReference type="OpenTargets" id="ENSG00000144504"/>
<dbReference type="PharmGKB" id="PA134925670"/>
<dbReference type="VEuPathDB" id="HostDB:ENSG00000144504"/>
<dbReference type="eggNOG" id="ENOG502QQJP">
    <property type="taxonomic scope" value="Eukaryota"/>
</dbReference>
<dbReference type="GeneTree" id="ENSGT00460000041630"/>
<dbReference type="HOGENOM" id="CLU_050860_0_0_1"/>
<dbReference type="InParanoid" id="Q9P2S6"/>
<dbReference type="OMA" id="CNKVFYC"/>
<dbReference type="OrthoDB" id="48314at2759"/>
<dbReference type="PAN-GO" id="Q9P2S6">
    <property type="GO annotations" value="0 GO annotations based on evolutionary models"/>
</dbReference>
<dbReference type="PhylomeDB" id="Q9P2S6"/>
<dbReference type="TreeFam" id="TF328860"/>
<dbReference type="PathwayCommons" id="Q9P2S6"/>
<dbReference type="BioGRID-ORCS" id="51281">
    <property type="hits" value="10 hits in 1155 CRISPR screens"/>
</dbReference>
<dbReference type="ChiTaRS" id="ANKMY1">
    <property type="organism name" value="human"/>
</dbReference>
<dbReference type="GenomeRNAi" id="51281"/>
<dbReference type="Pharos" id="Q9P2S6">
    <property type="development level" value="Tbio"/>
</dbReference>
<dbReference type="PRO" id="PR:Q9P2S6"/>
<dbReference type="Proteomes" id="UP000005640">
    <property type="component" value="Chromosome 2"/>
</dbReference>
<dbReference type="RNAct" id="Q9P2S6">
    <property type="molecule type" value="protein"/>
</dbReference>
<dbReference type="Bgee" id="ENSG00000144504">
    <property type="expression patterns" value="Expressed in right uterine tube and 117 other cell types or tissues"/>
</dbReference>
<dbReference type="ExpressionAtlas" id="Q9P2S6">
    <property type="expression patterns" value="baseline and differential"/>
</dbReference>
<dbReference type="GO" id="GO:0008270">
    <property type="term" value="F:zinc ion binding"/>
    <property type="evidence" value="ECO:0007669"/>
    <property type="project" value="UniProtKB-KW"/>
</dbReference>
<dbReference type="Gene3D" id="6.10.140.2220">
    <property type="match status" value="1"/>
</dbReference>
<dbReference type="Gene3D" id="1.25.40.20">
    <property type="entry name" value="Ankyrin repeat-containing domain"/>
    <property type="match status" value="3"/>
</dbReference>
<dbReference type="Gene3D" id="2.20.110.10">
    <property type="entry name" value="Histone H3 K4-specific methyltransferase SET7/9 N-terminal domain"/>
    <property type="match status" value="1"/>
</dbReference>
<dbReference type="InterPro" id="IPR053064">
    <property type="entry name" value="Ankyrin-MYND_domain-protein"/>
</dbReference>
<dbReference type="InterPro" id="IPR002110">
    <property type="entry name" value="Ankyrin_rpt"/>
</dbReference>
<dbReference type="InterPro" id="IPR036770">
    <property type="entry name" value="Ankyrin_rpt-contain_sf"/>
</dbReference>
<dbReference type="InterPro" id="IPR003409">
    <property type="entry name" value="MORN"/>
</dbReference>
<dbReference type="InterPro" id="IPR002893">
    <property type="entry name" value="Znf_MYND"/>
</dbReference>
<dbReference type="PANTHER" id="PTHR15897">
    <property type="entry name" value="ANKYRIN REPEAT AND MYND DOMAIN PROTEIN 1"/>
    <property type="match status" value="1"/>
</dbReference>
<dbReference type="PANTHER" id="PTHR15897:SF2">
    <property type="entry name" value="ANKYRIN REPEAT AND MYND DOMAIN-CONTAINING PROTEIN 1"/>
    <property type="match status" value="1"/>
</dbReference>
<dbReference type="Pfam" id="PF12796">
    <property type="entry name" value="Ank_2"/>
    <property type="match status" value="3"/>
</dbReference>
<dbReference type="Pfam" id="PF02493">
    <property type="entry name" value="MORN"/>
    <property type="match status" value="3"/>
</dbReference>
<dbReference type="Pfam" id="PF01753">
    <property type="entry name" value="zf-MYND"/>
    <property type="match status" value="1"/>
</dbReference>
<dbReference type="SMART" id="SM00248">
    <property type="entry name" value="ANK"/>
    <property type="match status" value="6"/>
</dbReference>
<dbReference type="SMART" id="SM00698">
    <property type="entry name" value="MORN"/>
    <property type="match status" value="3"/>
</dbReference>
<dbReference type="SUPFAM" id="SSF48403">
    <property type="entry name" value="Ankyrin repeat"/>
    <property type="match status" value="2"/>
</dbReference>
<dbReference type="SUPFAM" id="SSF82185">
    <property type="entry name" value="Histone H3 K4-specific methyltransferase SET7/9 N-terminal domain"/>
    <property type="match status" value="1"/>
</dbReference>
<dbReference type="SUPFAM" id="SSF144232">
    <property type="entry name" value="HIT/MYND zinc finger-like"/>
    <property type="match status" value="1"/>
</dbReference>
<dbReference type="PROSITE" id="PS50297">
    <property type="entry name" value="ANK_REP_REGION"/>
    <property type="match status" value="2"/>
</dbReference>
<dbReference type="PROSITE" id="PS50088">
    <property type="entry name" value="ANK_REPEAT"/>
    <property type="match status" value="4"/>
</dbReference>
<dbReference type="PROSITE" id="PS01360">
    <property type="entry name" value="ZF_MYND_1"/>
    <property type="match status" value="1"/>
</dbReference>
<dbReference type="PROSITE" id="PS50865">
    <property type="entry name" value="ZF_MYND_2"/>
    <property type="match status" value="1"/>
</dbReference>
<evidence type="ECO:0000255" key="1">
    <source>
        <dbReference type="PROSITE-ProRule" id="PRU00134"/>
    </source>
</evidence>
<evidence type="ECO:0000269" key="2">
    <source>
    </source>
</evidence>
<evidence type="ECO:0000269" key="3">
    <source>
    </source>
</evidence>
<evidence type="ECO:0000269" key="4">
    <source ref="1"/>
</evidence>
<evidence type="ECO:0000303" key="5">
    <source>
    </source>
</evidence>
<evidence type="ECO:0000303" key="6">
    <source>
    </source>
</evidence>
<evidence type="ECO:0000303" key="7">
    <source>
    </source>
</evidence>
<evidence type="ECO:0000305" key="8"/>
<comment type="alternative products">
    <event type="alternative splicing"/>
    <isoform>
        <id>Q9P2S6-1</id>
        <name>1</name>
        <sequence type="displayed"/>
    </isoform>
    <isoform>
        <id>Q9P2S6-2</id>
        <name>2</name>
        <sequence type="described" ref="VSP_007442 VSP_007445"/>
    </isoform>
    <isoform>
        <id>Q9P2S6-3</id>
        <name>3</name>
        <sequence type="described" ref="VSP_007442 VSP_007443 VSP_007444"/>
    </isoform>
    <isoform>
        <id>Q9P2S6-4</id>
        <name>4</name>
        <sequence type="described" ref="VSP_039104"/>
    </isoform>
</comment>
<proteinExistence type="evidence at protein level"/>
<keyword id="KW-0025">Alternative splicing</keyword>
<keyword id="KW-0040">ANK repeat</keyword>
<keyword id="KW-0479">Metal-binding</keyword>
<keyword id="KW-1267">Proteomics identification</keyword>
<keyword id="KW-1185">Reference proteome</keyword>
<keyword id="KW-0677">Repeat</keyword>
<keyword id="KW-0862">Zinc</keyword>
<keyword id="KW-0863">Zinc-finger</keyword>
<protein>
    <recommendedName>
        <fullName>Ankyrin repeat and MYND domain-containing protein 1</fullName>
    </recommendedName>
    <alternativeName>
        <fullName>Testis-specific ankyrin-like protein 1</fullName>
    </alternativeName>
    <alternativeName>
        <fullName>Zinc finger MYND domain-containing protein 13</fullName>
    </alternativeName>
</protein>
<name>ANKY1_HUMAN</name>